<gene>
    <name type="primary">mecA</name>
    <name type="ordered locus">BSU11520</name>
</gene>
<name>MECA1_BACSU</name>
<evidence type="ECO:0000269" key="1">
    <source>
    </source>
</evidence>
<evidence type="ECO:0000269" key="2">
    <source>
    </source>
</evidence>
<evidence type="ECO:0000305" key="3"/>
<evidence type="ECO:0007829" key="4">
    <source>
        <dbReference type="PDB" id="3JTP"/>
    </source>
</evidence>
<comment type="function">
    <text evidence="2">Enables the recognition and targeting of unfolded and aggregated proteins to the ClpC protease or to other proteins involved in proteolysis. Acts negatively in the development of competence by binding ComK and recruiting it to the ClpCP protease. When overexpressed, inhibits sporulation. Also involved in Spx degradation by ClpC.</text>
</comment>
<comment type="subunit">
    <text evidence="1">Homodimer.</text>
</comment>
<comment type="interaction">
    <interactant intactId="EBI-5254676">
        <id>P37958</id>
    </interactant>
    <interactant intactId="EBI-7349302">
        <id>P37571</id>
        <label>clpC</label>
    </interactant>
    <organismsDiffer>false</organismsDiffer>
    <experiments>11</experiments>
</comment>
<comment type="developmental stage">
    <text>Expressed throughout growth. There is a slight decline of expression during exponential growth and a slight increase after T0.</text>
</comment>
<comment type="domain">
    <text evidence="1">The N-terminal domain has binding sites for ComK and ComS and probably for unfolded/aggregated proteins; the C-terminal domain interacts with ClpC.</text>
</comment>
<comment type="similarity">
    <text evidence="3">Belongs to the MecA family.</text>
</comment>
<keyword id="KW-0002">3D-structure</keyword>
<keyword id="KW-0178">Competence</keyword>
<keyword id="KW-1185">Reference proteome</keyword>
<keyword id="KW-0749">Sporulation</keyword>
<sequence>MEIERINEHTVKFYMSYGDIEDRGFDREEIWYNRERSEELFWEVMDEVHEEEEFAVEGPLWIQVQALDKGLEIIVTKAQLSKDGQKLELPIPEDKKQEPASEDLDALLDDFQKEEQAVNQEEKEQKLQFVLRFGDFEDVISLSKLNVNGSKTTLYSFENRYYLYVDFCNMTDEEVENQLSILLEYATESSISIHRLEEYGKLIISEHALETIKKHFAS</sequence>
<dbReference type="EMBL" id="L06059">
    <property type="protein sequence ID" value="AAC36956.1"/>
    <property type="molecule type" value="Unassigned_DNA"/>
</dbReference>
<dbReference type="EMBL" id="AL009126">
    <property type="protein sequence ID" value="CAB13009.1"/>
    <property type="molecule type" value="Genomic_DNA"/>
</dbReference>
<dbReference type="PIR" id="S35289">
    <property type="entry name" value="S35289"/>
</dbReference>
<dbReference type="RefSeq" id="NP_389034.1">
    <property type="nucleotide sequence ID" value="NC_000964.3"/>
</dbReference>
<dbReference type="RefSeq" id="WP_003245194.1">
    <property type="nucleotide sequence ID" value="NZ_OZ025638.1"/>
</dbReference>
<dbReference type="PDB" id="2Y1R">
    <property type="method" value="X-ray"/>
    <property type="resolution" value="2.60 A"/>
    <property type="chains" value="I/J/K/L/M/N/O/P=121-218"/>
</dbReference>
<dbReference type="PDB" id="3J3R">
    <property type="method" value="EM"/>
    <property type="resolution" value="9.40 A"/>
    <property type="chains" value="1/2/3/4/5/6=1-218"/>
</dbReference>
<dbReference type="PDB" id="3J3S">
    <property type="method" value="EM"/>
    <property type="resolution" value="11.00 A"/>
    <property type="chains" value="1/2/3/4/5/6=1-218"/>
</dbReference>
<dbReference type="PDB" id="3J3T">
    <property type="method" value="EM"/>
    <property type="resolution" value="9.00 A"/>
    <property type="chains" value="1/2/3/4/5/6=1-218"/>
</dbReference>
<dbReference type="PDB" id="3J3U">
    <property type="method" value="EM"/>
    <property type="resolution" value="10.00 A"/>
    <property type="chains" value="1/2/3/4/5/6=1-218"/>
</dbReference>
<dbReference type="PDB" id="3JTP">
    <property type="method" value="X-ray"/>
    <property type="resolution" value="2.17 A"/>
    <property type="chains" value="A/B/C/D=121-218"/>
</dbReference>
<dbReference type="PDB" id="3PXG">
    <property type="method" value="X-ray"/>
    <property type="resolution" value="3.65 A"/>
    <property type="chains" value="a/b/c/d/e/f=121-218"/>
</dbReference>
<dbReference type="PDB" id="3PXI">
    <property type="method" value="X-ray"/>
    <property type="resolution" value="6.93 A"/>
    <property type="chains" value="a/b/c=108-218"/>
</dbReference>
<dbReference type="PDBsum" id="2Y1R"/>
<dbReference type="PDBsum" id="3J3R"/>
<dbReference type="PDBsum" id="3J3S"/>
<dbReference type="PDBsum" id="3J3T"/>
<dbReference type="PDBsum" id="3J3U"/>
<dbReference type="PDBsum" id="3JTP"/>
<dbReference type="PDBsum" id="3PXG"/>
<dbReference type="PDBsum" id="3PXI"/>
<dbReference type="BMRB" id="P37958"/>
<dbReference type="EMDB" id="EMD-5607"/>
<dbReference type="EMDB" id="EMD-5608"/>
<dbReference type="EMDB" id="EMD-5609"/>
<dbReference type="EMDB" id="EMD-5610"/>
<dbReference type="SMR" id="P37958"/>
<dbReference type="DIP" id="DIP-43709N"/>
<dbReference type="FunCoup" id="P37958">
    <property type="interactions" value="29"/>
</dbReference>
<dbReference type="IntAct" id="P37958">
    <property type="interactions" value="2"/>
</dbReference>
<dbReference type="MINT" id="P37958"/>
<dbReference type="STRING" id="224308.BSU11520"/>
<dbReference type="PaxDb" id="224308-BSU11520"/>
<dbReference type="EnsemblBacteria" id="CAB13009">
    <property type="protein sequence ID" value="CAB13009"/>
    <property type="gene ID" value="BSU_11520"/>
</dbReference>
<dbReference type="GeneID" id="936406"/>
<dbReference type="KEGG" id="bsu:BSU11520"/>
<dbReference type="PATRIC" id="fig|224308.179.peg.1239"/>
<dbReference type="eggNOG" id="COG4862">
    <property type="taxonomic scope" value="Bacteria"/>
</dbReference>
<dbReference type="InParanoid" id="P37958"/>
<dbReference type="OrthoDB" id="2360201at2"/>
<dbReference type="PhylomeDB" id="P37958"/>
<dbReference type="BioCyc" id="BSUB:BSU11520-MONOMER"/>
<dbReference type="EvolutionaryTrace" id="P37958"/>
<dbReference type="Proteomes" id="UP000001570">
    <property type="component" value="Chromosome"/>
</dbReference>
<dbReference type="GO" id="GO:0030674">
    <property type="term" value="F:protein-macromolecule adaptor activity"/>
    <property type="evidence" value="ECO:0007669"/>
    <property type="project" value="UniProtKB-UniRule"/>
</dbReference>
<dbReference type="GO" id="GO:0030420">
    <property type="term" value="P:establishment of competence for transformation"/>
    <property type="evidence" value="ECO:0007669"/>
    <property type="project" value="UniProtKB-KW"/>
</dbReference>
<dbReference type="GO" id="GO:0045808">
    <property type="term" value="P:negative regulation of establishment of competence for transformation"/>
    <property type="evidence" value="ECO:0007669"/>
    <property type="project" value="UniProtKB-UniRule"/>
</dbReference>
<dbReference type="GO" id="GO:0042174">
    <property type="term" value="P:negative regulation of sporulation resulting in formation of a cellular spore"/>
    <property type="evidence" value="ECO:0007669"/>
    <property type="project" value="UniProtKB-UniRule"/>
</dbReference>
<dbReference type="GO" id="GO:0030435">
    <property type="term" value="P:sporulation resulting in formation of a cellular spore"/>
    <property type="evidence" value="ECO:0007669"/>
    <property type="project" value="UniProtKB-KW"/>
</dbReference>
<dbReference type="Gene3D" id="3.30.70.1950">
    <property type="match status" value="1"/>
</dbReference>
<dbReference type="HAMAP" id="MF_01124">
    <property type="entry name" value="MecA"/>
    <property type="match status" value="1"/>
</dbReference>
<dbReference type="InterPro" id="IPR038471">
    <property type="entry name" value="MecA_C_sf"/>
</dbReference>
<dbReference type="InterPro" id="IPR008681">
    <property type="entry name" value="Neg-reg_MecA"/>
</dbReference>
<dbReference type="NCBIfam" id="NF002644">
    <property type="entry name" value="PRK02315.1-5"/>
    <property type="match status" value="1"/>
</dbReference>
<dbReference type="PANTHER" id="PTHR39161">
    <property type="entry name" value="ADAPTER PROTEIN MECA"/>
    <property type="match status" value="1"/>
</dbReference>
<dbReference type="PANTHER" id="PTHR39161:SF1">
    <property type="entry name" value="ADAPTER PROTEIN MECA 1"/>
    <property type="match status" value="1"/>
</dbReference>
<dbReference type="Pfam" id="PF05389">
    <property type="entry name" value="MecA"/>
    <property type="match status" value="1"/>
</dbReference>
<dbReference type="PIRSF" id="PIRSF029008">
    <property type="entry name" value="MecA"/>
    <property type="match status" value="1"/>
</dbReference>
<reference key="1">
    <citation type="journal article" date="1993" name="Mol. Microbiol.">
        <title>Sequence and properties of mecA, a negative regulator of genetic competence in Bacillus subtilis.</title>
        <authorList>
            <person name="Kong L."/>
            <person name="Siranosian K.J."/>
            <person name="Grossman A.D."/>
            <person name="Dubnau D."/>
        </authorList>
    </citation>
    <scope>NUCLEOTIDE SEQUENCE [GENOMIC DNA]</scope>
    <source>
        <strain>168</strain>
    </source>
</reference>
<reference key="2">
    <citation type="journal article" date="1997" name="Nature">
        <title>The complete genome sequence of the Gram-positive bacterium Bacillus subtilis.</title>
        <authorList>
            <person name="Kunst F."/>
            <person name="Ogasawara N."/>
            <person name="Moszer I."/>
            <person name="Albertini A.M."/>
            <person name="Alloni G."/>
            <person name="Azevedo V."/>
            <person name="Bertero M.G."/>
            <person name="Bessieres P."/>
            <person name="Bolotin A."/>
            <person name="Borchert S."/>
            <person name="Borriss R."/>
            <person name="Boursier L."/>
            <person name="Brans A."/>
            <person name="Braun M."/>
            <person name="Brignell S.C."/>
            <person name="Bron S."/>
            <person name="Brouillet S."/>
            <person name="Bruschi C.V."/>
            <person name="Caldwell B."/>
            <person name="Capuano V."/>
            <person name="Carter N.M."/>
            <person name="Choi S.-K."/>
            <person name="Codani J.-J."/>
            <person name="Connerton I.F."/>
            <person name="Cummings N.J."/>
            <person name="Daniel R.A."/>
            <person name="Denizot F."/>
            <person name="Devine K.M."/>
            <person name="Duesterhoeft A."/>
            <person name="Ehrlich S.D."/>
            <person name="Emmerson P.T."/>
            <person name="Entian K.-D."/>
            <person name="Errington J."/>
            <person name="Fabret C."/>
            <person name="Ferrari E."/>
            <person name="Foulger D."/>
            <person name="Fritz C."/>
            <person name="Fujita M."/>
            <person name="Fujita Y."/>
            <person name="Fuma S."/>
            <person name="Galizzi A."/>
            <person name="Galleron N."/>
            <person name="Ghim S.-Y."/>
            <person name="Glaser P."/>
            <person name="Goffeau A."/>
            <person name="Golightly E.J."/>
            <person name="Grandi G."/>
            <person name="Guiseppi G."/>
            <person name="Guy B.J."/>
            <person name="Haga K."/>
            <person name="Haiech J."/>
            <person name="Harwood C.R."/>
            <person name="Henaut A."/>
            <person name="Hilbert H."/>
            <person name="Holsappel S."/>
            <person name="Hosono S."/>
            <person name="Hullo M.-F."/>
            <person name="Itaya M."/>
            <person name="Jones L.-M."/>
            <person name="Joris B."/>
            <person name="Karamata D."/>
            <person name="Kasahara Y."/>
            <person name="Klaerr-Blanchard M."/>
            <person name="Klein C."/>
            <person name="Kobayashi Y."/>
            <person name="Koetter P."/>
            <person name="Koningstein G."/>
            <person name="Krogh S."/>
            <person name="Kumano M."/>
            <person name="Kurita K."/>
            <person name="Lapidus A."/>
            <person name="Lardinois S."/>
            <person name="Lauber J."/>
            <person name="Lazarevic V."/>
            <person name="Lee S.-M."/>
            <person name="Levine A."/>
            <person name="Liu H."/>
            <person name="Masuda S."/>
            <person name="Mauel C."/>
            <person name="Medigue C."/>
            <person name="Medina N."/>
            <person name="Mellado R.P."/>
            <person name="Mizuno M."/>
            <person name="Moestl D."/>
            <person name="Nakai S."/>
            <person name="Noback M."/>
            <person name="Noone D."/>
            <person name="O'Reilly M."/>
            <person name="Ogawa K."/>
            <person name="Ogiwara A."/>
            <person name="Oudega B."/>
            <person name="Park S.-H."/>
            <person name="Parro V."/>
            <person name="Pohl T.M."/>
            <person name="Portetelle D."/>
            <person name="Porwollik S."/>
            <person name="Prescott A.M."/>
            <person name="Presecan E."/>
            <person name="Pujic P."/>
            <person name="Purnelle B."/>
            <person name="Rapoport G."/>
            <person name="Rey M."/>
            <person name="Reynolds S."/>
            <person name="Rieger M."/>
            <person name="Rivolta C."/>
            <person name="Rocha E."/>
            <person name="Roche B."/>
            <person name="Rose M."/>
            <person name="Sadaie Y."/>
            <person name="Sato T."/>
            <person name="Scanlan E."/>
            <person name="Schleich S."/>
            <person name="Schroeter R."/>
            <person name="Scoffone F."/>
            <person name="Sekiguchi J."/>
            <person name="Sekowska A."/>
            <person name="Seror S.J."/>
            <person name="Serror P."/>
            <person name="Shin B.-S."/>
            <person name="Soldo B."/>
            <person name="Sorokin A."/>
            <person name="Tacconi E."/>
            <person name="Takagi T."/>
            <person name="Takahashi H."/>
            <person name="Takemaru K."/>
            <person name="Takeuchi M."/>
            <person name="Tamakoshi A."/>
            <person name="Tanaka T."/>
            <person name="Terpstra P."/>
            <person name="Tognoni A."/>
            <person name="Tosato V."/>
            <person name="Uchiyama S."/>
            <person name="Vandenbol M."/>
            <person name="Vannier F."/>
            <person name="Vassarotti A."/>
            <person name="Viari A."/>
            <person name="Wambutt R."/>
            <person name="Wedler E."/>
            <person name="Wedler H."/>
            <person name="Weitzenegger T."/>
            <person name="Winters P."/>
            <person name="Wipat A."/>
            <person name="Yamamoto H."/>
            <person name="Yamane K."/>
            <person name="Yasumoto K."/>
            <person name="Yata K."/>
            <person name="Yoshida K."/>
            <person name="Yoshikawa H.-F."/>
            <person name="Zumstein E."/>
            <person name="Yoshikawa H."/>
            <person name="Danchin A."/>
        </authorList>
    </citation>
    <scope>NUCLEOTIDE SEQUENCE [LARGE SCALE GENOMIC DNA]</scope>
    <source>
        <strain>168</strain>
    </source>
</reference>
<reference key="3">
    <citation type="journal article" date="1999" name="Mol. Microbiol.">
        <title>The N- and C-terminal domains of MecA recognize different partners in the competence molecular switch.</title>
        <authorList>
            <person name="Persuh M."/>
            <person name="Turgay K."/>
            <person name="Mandic-Mulec I."/>
            <person name="Dubnau D."/>
        </authorList>
    </citation>
    <scope>SUBUNIT</scope>
    <scope>DOMAIN STRUCTURE</scope>
    <source>
        <strain>168</strain>
    </source>
</reference>
<reference key="4">
    <citation type="journal article" date="2003" name="Proc. Natl. Acad. Sci. U.S.A.">
        <title>MecA, an adaptor protein necessary for ClpC chaperone activity.</title>
        <authorList>
            <person name="Schlothauer T."/>
            <person name="Mogk A."/>
            <person name="Dougan D.A."/>
            <person name="Bukau B."/>
            <person name="Turgay K."/>
        </authorList>
    </citation>
    <scope>FUNCTION</scope>
</reference>
<organism>
    <name type="scientific">Bacillus subtilis (strain 168)</name>
    <dbReference type="NCBI Taxonomy" id="224308"/>
    <lineage>
        <taxon>Bacteria</taxon>
        <taxon>Bacillati</taxon>
        <taxon>Bacillota</taxon>
        <taxon>Bacilli</taxon>
        <taxon>Bacillales</taxon>
        <taxon>Bacillaceae</taxon>
        <taxon>Bacillus</taxon>
    </lineage>
</organism>
<protein>
    <recommendedName>
        <fullName>Adapter protein MecA 1</fullName>
    </recommendedName>
</protein>
<feature type="chain" id="PRO_0000212267" description="Adapter protein MecA 1">
    <location>
        <begin position="1"/>
        <end position="218"/>
    </location>
</feature>
<feature type="strand" evidence="4">
    <location>
        <begin position="128"/>
        <end position="135"/>
    </location>
</feature>
<feature type="helix" evidence="4">
    <location>
        <begin position="136"/>
        <end position="144"/>
    </location>
</feature>
<feature type="strand" evidence="4">
    <location>
        <begin position="150"/>
        <end position="157"/>
    </location>
</feature>
<feature type="strand" evidence="4">
    <location>
        <begin position="160"/>
        <end position="166"/>
    </location>
</feature>
<feature type="helix" evidence="4">
    <location>
        <begin position="174"/>
        <end position="185"/>
    </location>
</feature>
<feature type="helix" evidence="4">
    <location>
        <begin position="193"/>
        <end position="199"/>
    </location>
</feature>
<feature type="strand" evidence="4">
    <location>
        <begin position="200"/>
        <end position="204"/>
    </location>
</feature>
<feature type="helix" evidence="4">
    <location>
        <begin position="208"/>
        <end position="216"/>
    </location>
</feature>
<proteinExistence type="evidence at protein level"/>
<accession>P37958</accession>